<accession>Q1B6R1</accession>
<protein>
    <recommendedName>
        <fullName evidence="1">Lipoyl synthase</fullName>
        <ecNumber evidence="1">2.8.1.8</ecNumber>
    </recommendedName>
    <alternativeName>
        <fullName evidence="1">Lip-syn</fullName>
        <shortName evidence="1">LS</shortName>
    </alternativeName>
    <alternativeName>
        <fullName evidence="1">Lipoate synthase</fullName>
    </alternativeName>
    <alternativeName>
        <fullName evidence="1">Lipoic acid synthase</fullName>
    </alternativeName>
    <alternativeName>
        <fullName evidence="1">Sulfur insertion protein LipA</fullName>
    </alternativeName>
</protein>
<keyword id="KW-0004">4Fe-4S</keyword>
<keyword id="KW-0963">Cytoplasm</keyword>
<keyword id="KW-0408">Iron</keyword>
<keyword id="KW-0411">Iron-sulfur</keyword>
<keyword id="KW-0479">Metal-binding</keyword>
<keyword id="KW-0949">S-adenosyl-L-methionine</keyword>
<keyword id="KW-0808">Transferase</keyword>
<feature type="chain" id="PRO_1000012238" description="Lipoyl synthase">
    <location>
        <begin position="1"/>
        <end position="325"/>
    </location>
</feature>
<feature type="domain" description="Radical SAM core" evidence="2">
    <location>
        <begin position="78"/>
        <end position="292"/>
    </location>
</feature>
<feature type="binding site" evidence="1">
    <location>
        <position position="66"/>
    </location>
    <ligand>
        <name>[4Fe-4S] cluster</name>
        <dbReference type="ChEBI" id="CHEBI:49883"/>
        <label>1</label>
    </ligand>
</feature>
<feature type="binding site" evidence="1">
    <location>
        <position position="71"/>
    </location>
    <ligand>
        <name>[4Fe-4S] cluster</name>
        <dbReference type="ChEBI" id="CHEBI:49883"/>
        <label>1</label>
    </ligand>
</feature>
<feature type="binding site" evidence="1">
    <location>
        <position position="77"/>
    </location>
    <ligand>
        <name>[4Fe-4S] cluster</name>
        <dbReference type="ChEBI" id="CHEBI:49883"/>
        <label>1</label>
    </ligand>
</feature>
<feature type="binding site" evidence="1">
    <location>
        <position position="92"/>
    </location>
    <ligand>
        <name>[4Fe-4S] cluster</name>
        <dbReference type="ChEBI" id="CHEBI:49883"/>
        <label>2</label>
        <note>4Fe-4S-S-AdoMet</note>
    </ligand>
</feature>
<feature type="binding site" evidence="1">
    <location>
        <position position="96"/>
    </location>
    <ligand>
        <name>[4Fe-4S] cluster</name>
        <dbReference type="ChEBI" id="CHEBI:49883"/>
        <label>2</label>
        <note>4Fe-4S-S-AdoMet</note>
    </ligand>
</feature>
<feature type="binding site" evidence="1">
    <location>
        <position position="99"/>
    </location>
    <ligand>
        <name>[4Fe-4S] cluster</name>
        <dbReference type="ChEBI" id="CHEBI:49883"/>
        <label>2</label>
        <note>4Fe-4S-S-AdoMet</note>
    </ligand>
</feature>
<feature type="binding site" evidence="1">
    <location>
        <position position="303"/>
    </location>
    <ligand>
        <name>[4Fe-4S] cluster</name>
        <dbReference type="ChEBI" id="CHEBI:49883"/>
        <label>1</label>
    </ligand>
</feature>
<organism>
    <name type="scientific">Mycobacterium sp. (strain MCS)</name>
    <dbReference type="NCBI Taxonomy" id="164756"/>
    <lineage>
        <taxon>Bacteria</taxon>
        <taxon>Bacillati</taxon>
        <taxon>Actinomycetota</taxon>
        <taxon>Actinomycetes</taxon>
        <taxon>Mycobacteriales</taxon>
        <taxon>Mycobacteriaceae</taxon>
        <taxon>Mycobacterium</taxon>
    </lineage>
</organism>
<name>LIPA_MYCSS</name>
<reference key="1">
    <citation type="submission" date="2006-06" db="EMBL/GenBank/DDBJ databases">
        <title>Complete sequence of chromosome of Mycobacterium sp. MCS.</title>
        <authorList>
            <consortium name="US DOE Joint Genome Institute"/>
            <person name="Copeland A."/>
            <person name="Lucas S."/>
            <person name="Lapidus A."/>
            <person name="Barry K."/>
            <person name="Detter J.C."/>
            <person name="Glavina del Rio T."/>
            <person name="Hammon N."/>
            <person name="Israni S."/>
            <person name="Dalin E."/>
            <person name="Tice H."/>
            <person name="Pitluck S."/>
            <person name="Martinez M."/>
            <person name="Schmutz J."/>
            <person name="Larimer F."/>
            <person name="Land M."/>
            <person name="Hauser L."/>
            <person name="Kyrpides N."/>
            <person name="Kim E."/>
            <person name="Miller C.D."/>
            <person name="Hughes J.E."/>
            <person name="Anderson A.J."/>
            <person name="Sims R.C."/>
            <person name="Richardson P."/>
        </authorList>
    </citation>
    <scope>NUCLEOTIDE SEQUENCE [LARGE SCALE GENOMIC DNA]</scope>
    <source>
        <strain>MCS</strain>
    </source>
</reference>
<comment type="function">
    <text evidence="1">Catalyzes the radical-mediated insertion of two sulfur atoms into the C-6 and C-8 positions of the octanoyl moiety bound to the lipoyl domains of lipoate-dependent enzymes, thereby converting the octanoylated domains into lipoylated derivatives.</text>
</comment>
<comment type="catalytic activity">
    <reaction evidence="1">
        <text>[[Fe-S] cluster scaffold protein carrying a second [4Fe-4S](2+) cluster] + N(6)-octanoyl-L-lysyl-[protein] + 2 oxidized [2Fe-2S]-[ferredoxin] + 2 S-adenosyl-L-methionine + 4 H(+) = [[Fe-S] cluster scaffold protein] + N(6)-[(R)-dihydrolipoyl]-L-lysyl-[protein] + 4 Fe(3+) + 2 hydrogen sulfide + 2 5'-deoxyadenosine + 2 L-methionine + 2 reduced [2Fe-2S]-[ferredoxin]</text>
        <dbReference type="Rhea" id="RHEA:16585"/>
        <dbReference type="Rhea" id="RHEA-COMP:9928"/>
        <dbReference type="Rhea" id="RHEA-COMP:10000"/>
        <dbReference type="Rhea" id="RHEA-COMP:10001"/>
        <dbReference type="Rhea" id="RHEA-COMP:10475"/>
        <dbReference type="Rhea" id="RHEA-COMP:14568"/>
        <dbReference type="Rhea" id="RHEA-COMP:14569"/>
        <dbReference type="ChEBI" id="CHEBI:15378"/>
        <dbReference type="ChEBI" id="CHEBI:17319"/>
        <dbReference type="ChEBI" id="CHEBI:29034"/>
        <dbReference type="ChEBI" id="CHEBI:29919"/>
        <dbReference type="ChEBI" id="CHEBI:33722"/>
        <dbReference type="ChEBI" id="CHEBI:33737"/>
        <dbReference type="ChEBI" id="CHEBI:33738"/>
        <dbReference type="ChEBI" id="CHEBI:57844"/>
        <dbReference type="ChEBI" id="CHEBI:59789"/>
        <dbReference type="ChEBI" id="CHEBI:78809"/>
        <dbReference type="ChEBI" id="CHEBI:83100"/>
        <dbReference type="EC" id="2.8.1.8"/>
    </reaction>
</comment>
<comment type="cofactor">
    <cofactor evidence="1">
        <name>[4Fe-4S] cluster</name>
        <dbReference type="ChEBI" id="CHEBI:49883"/>
    </cofactor>
    <text evidence="1">Binds 2 [4Fe-4S] clusters per subunit. One cluster is coordinated with 3 cysteines and an exchangeable S-adenosyl-L-methionine.</text>
</comment>
<comment type="pathway">
    <text evidence="1">Protein modification; protein lipoylation via endogenous pathway; protein N(6)-(lipoyl)lysine from octanoyl-[acyl-carrier-protein]: step 2/2.</text>
</comment>
<comment type="subcellular location">
    <subcellularLocation>
        <location evidence="1">Cytoplasm</location>
    </subcellularLocation>
</comment>
<comment type="similarity">
    <text evidence="1">Belongs to the radical SAM superfamily. Lipoyl synthase family.</text>
</comment>
<gene>
    <name evidence="1" type="primary">lipA</name>
    <name type="ordered locus">Mmcs_3316</name>
</gene>
<dbReference type="EC" id="2.8.1.8" evidence="1"/>
<dbReference type="EMBL" id="CP000384">
    <property type="protein sequence ID" value="ABG09423.1"/>
    <property type="molecule type" value="Genomic_DNA"/>
</dbReference>
<dbReference type="SMR" id="Q1B6R1"/>
<dbReference type="KEGG" id="mmc:Mmcs_3316"/>
<dbReference type="HOGENOM" id="CLU_033144_2_1_11"/>
<dbReference type="BioCyc" id="MSP164756:G1G6O-3382-MONOMER"/>
<dbReference type="UniPathway" id="UPA00538">
    <property type="reaction ID" value="UER00593"/>
</dbReference>
<dbReference type="GO" id="GO:0005737">
    <property type="term" value="C:cytoplasm"/>
    <property type="evidence" value="ECO:0007669"/>
    <property type="project" value="UniProtKB-SubCell"/>
</dbReference>
<dbReference type="GO" id="GO:0051539">
    <property type="term" value="F:4 iron, 4 sulfur cluster binding"/>
    <property type="evidence" value="ECO:0007669"/>
    <property type="project" value="UniProtKB-UniRule"/>
</dbReference>
<dbReference type="GO" id="GO:0016992">
    <property type="term" value="F:lipoate synthase activity"/>
    <property type="evidence" value="ECO:0007669"/>
    <property type="project" value="UniProtKB-UniRule"/>
</dbReference>
<dbReference type="GO" id="GO:0046872">
    <property type="term" value="F:metal ion binding"/>
    <property type="evidence" value="ECO:0007669"/>
    <property type="project" value="UniProtKB-KW"/>
</dbReference>
<dbReference type="CDD" id="cd01335">
    <property type="entry name" value="Radical_SAM"/>
    <property type="match status" value="1"/>
</dbReference>
<dbReference type="FunFam" id="3.20.20.70:FF:000116">
    <property type="entry name" value="Lipoyl synthase"/>
    <property type="match status" value="1"/>
</dbReference>
<dbReference type="Gene3D" id="3.20.20.70">
    <property type="entry name" value="Aldolase class I"/>
    <property type="match status" value="1"/>
</dbReference>
<dbReference type="HAMAP" id="MF_00206">
    <property type="entry name" value="Lipoyl_synth"/>
    <property type="match status" value="1"/>
</dbReference>
<dbReference type="InterPro" id="IPR013785">
    <property type="entry name" value="Aldolase_TIM"/>
</dbReference>
<dbReference type="InterPro" id="IPR006638">
    <property type="entry name" value="Elp3/MiaA/NifB-like_rSAM"/>
</dbReference>
<dbReference type="InterPro" id="IPR031691">
    <property type="entry name" value="LIAS_N"/>
</dbReference>
<dbReference type="InterPro" id="IPR003698">
    <property type="entry name" value="Lipoyl_synth"/>
</dbReference>
<dbReference type="InterPro" id="IPR007197">
    <property type="entry name" value="rSAM"/>
</dbReference>
<dbReference type="NCBIfam" id="TIGR00510">
    <property type="entry name" value="lipA"/>
    <property type="match status" value="1"/>
</dbReference>
<dbReference type="NCBIfam" id="NF004019">
    <property type="entry name" value="PRK05481.1"/>
    <property type="match status" value="1"/>
</dbReference>
<dbReference type="NCBIfam" id="NF009544">
    <property type="entry name" value="PRK12928.1"/>
    <property type="match status" value="1"/>
</dbReference>
<dbReference type="PANTHER" id="PTHR10949">
    <property type="entry name" value="LIPOYL SYNTHASE"/>
    <property type="match status" value="1"/>
</dbReference>
<dbReference type="PANTHER" id="PTHR10949:SF0">
    <property type="entry name" value="LIPOYL SYNTHASE, MITOCHONDRIAL"/>
    <property type="match status" value="1"/>
</dbReference>
<dbReference type="Pfam" id="PF16881">
    <property type="entry name" value="LIAS_N"/>
    <property type="match status" value="1"/>
</dbReference>
<dbReference type="Pfam" id="PF04055">
    <property type="entry name" value="Radical_SAM"/>
    <property type="match status" value="1"/>
</dbReference>
<dbReference type="PIRSF" id="PIRSF005963">
    <property type="entry name" value="Lipoyl_synth"/>
    <property type="match status" value="1"/>
</dbReference>
<dbReference type="SFLD" id="SFLDF00271">
    <property type="entry name" value="lipoyl_synthase"/>
    <property type="match status" value="1"/>
</dbReference>
<dbReference type="SFLD" id="SFLDG01058">
    <property type="entry name" value="lipoyl_synthase_like"/>
    <property type="match status" value="1"/>
</dbReference>
<dbReference type="SMART" id="SM00729">
    <property type="entry name" value="Elp3"/>
    <property type="match status" value="1"/>
</dbReference>
<dbReference type="SUPFAM" id="SSF102114">
    <property type="entry name" value="Radical SAM enzymes"/>
    <property type="match status" value="1"/>
</dbReference>
<dbReference type="PROSITE" id="PS51918">
    <property type="entry name" value="RADICAL_SAM"/>
    <property type="match status" value="1"/>
</dbReference>
<proteinExistence type="inferred from homology"/>
<evidence type="ECO:0000255" key="1">
    <source>
        <dbReference type="HAMAP-Rule" id="MF_00206"/>
    </source>
</evidence>
<evidence type="ECO:0000255" key="2">
    <source>
        <dbReference type="PROSITE-ProRule" id="PRU01266"/>
    </source>
</evidence>
<sequence>MTVTPSGSNGAGSAAPEGRKLLRLEVRNAQTPIERKPPWIKTRARMGPEYKELKSLVKREGLHTVCEEAGCPNIFECWEDREATFLIGGEQCTRRCDFCQIDTGKPSELDRDEPRRVAESVQAMGLRYSTVTGVARDDLPDGGAWLYAETVREIKRLNPNTGVELLIPDFNGDPALLAQVFESRPEVLAHNVETVPRIFKRIRPAFRYERSLAVLTAARDDNLVTKSNLILGMGETPDEVRTALVDLHEAGCDIITITQYLRPSPRHHPVERWVKPEEFVEFAQFAEGLGFAGVLSGPLVRSSYRAGRLYAQAARLKPAATPPVS</sequence>